<sequence length="295" mass="32585">MSILPIIKGEYKKDYNLKHLTWFKVGGNAEIFFKPFDSADLKSFLIQNNKKLPITTFGSGSNIIIRDGGIEGVVIKLGKNFNNIEFLDNHLIVGSSCLNYNLAKFCQANAISGFEFLVGIPGTIGGGVVMNAGAYGSAFQDIIVQIEALDFLGNFLTFTNKEIGFKYRGNNLPKDLILLKAIFKANKGDSQNILLKMNKINTTRSSTQPIKERTGGSTFKNPVGCKSWELIDKAGLRGYRIGGASMSELHCNFMINNGNATAKDLEDLGNFVRQKVFEDSGVELNWEIKRIGKYV</sequence>
<keyword id="KW-0131">Cell cycle</keyword>
<keyword id="KW-0132">Cell division</keyword>
<keyword id="KW-0133">Cell shape</keyword>
<keyword id="KW-0961">Cell wall biogenesis/degradation</keyword>
<keyword id="KW-0963">Cytoplasm</keyword>
<keyword id="KW-0274">FAD</keyword>
<keyword id="KW-0285">Flavoprotein</keyword>
<keyword id="KW-0521">NADP</keyword>
<keyword id="KW-0560">Oxidoreductase</keyword>
<keyword id="KW-0573">Peptidoglycan synthesis</keyword>
<name>MURB_RICTY</name>
<reference key="1">
    <citation type="journal article" date="2004" name="J. Bacteriol.">
        <title>Complete genome sequence of Rickettsia typhi and comparison with sequences of other Rickettsiae.</title>
        <authorList>
            <person name="McLeod M.P."/>
            <person name="Qin X."/>
            <person name="Karpathy S.E."/>
            <person name="Gioia J."/>
            <person name="Highlander S.K."/>
            <person name="Fox G.E."/>
            <person name="McNeill T.Z."/>
            <person name="Jiang H."/>
            <person name="Muzny D."/>
            <person name="Jacob L.S."/>
            <person name="Hawes A.C."/>
            <person name="Sodergren E."/>
            <person name="Gill R."/>
            <person name="Hume J."/>
            <person name="Morgan M."/>
            <person name="Fan G."/>
            <person name="Amin A.G."/>
            <person name="Gibbs R.A."/>
            <person name="Hong C."/>
            <person name="Yu X.-J."/>
            <person name="Walker D.H."/>
            <person name="Weinstock G.M."/>
        </authorList>
    </citation>
    <scope>NUCLEOTIDE SEQUENCE [LARGE SCALE GENOMIC DNA]</scope>
    <source>
        <strain>ATCC VR-144 / Wilmington</strain>
    </source>
</reference>
<gene>
    <name evidence="1" type="primary">murB</name>
    <name type="ordered locus">RT0240</name>
</gene>
<accession>Q68XC1</accession>
<feature type="chain" id="PRO_0000224715" description="UDP-N-acetylenolpyruvoylglucosamine reductase">
    <location>
        <begin position="1"/>
        <end position="295"/>
    </location>
</feature>
<feature type="domain" description="FAD-binding PCMH-type" evidence="1">
    <location>
        <begin position="24"/>
        <end position="188"/>
    </location>
</feature>
<feature type="active site" evidence="1">
    <location>
        <position position="168"/>
    </location>
</feature>
<feature type="active site" description="Proton donor" evidence="1">
    <location>
        <position position="217"/>
    </location>
</feature>
<feature type="active site" evidence="1">
    <location>
        <position position="287"/>
    </location>
</feature>
<evidence type="ECO:0000255" key="1">
    <source>
        <dbReference type="HAMAP-Rule" id="MF_00037"/>
    </source>
</evidence>
<proteinExistence type="inferred from homology"/>
<comment type="function">
    <text evidence="1">Cell wall formation.</text>
</comment>
<comment type="catalytic activity">
    <reaction evidence="1">
        <text>UDP-N-acetyl-alpha-D-muramate + NADP(+) = UDP-N-acetyl-3-O-(1-carboxyvinyl)-alpha-D-glucosamine + NADPH + H(+)</text>
        <dbReference type="Rhea" id="RHEA:12248"/>
        <dbReference type="ChEBI" id="CHEBI:15378"/>
        <dbReference type="ChEBI" id="CHEBI:57783"/>
        <dbReference type="ChEBI" id="CHEBI:58349"/>
        <dbReference type="ChEBI" id="CHEBI:68483"/>
        <dbReference type="ChEBI" id="CHEBI:70757"/>
        <dbReference type="EC" id="1.3.1.98"/>
    </reaction>
</comment>
<comment type="cofactor">
    <cofactor evidence="1">
        <name>FAD</name>
        <dbReference type="ChEBI" id="CHEBI:57692"/>
    </cofactor>
</comment>
<comment type="pathway">
    <text evidence="1">Cell wall biogenesis; peptidoglycan biosynthesis.</text>
</comment>
<comment type="subcellular location">
    <subcellularLocation>
        <location evidence="1">Cytoplasm</location>
    </subcellularLocation>
</comment>
<comment type="similarity">
    <text evidence="1">Belongs to the MurB family.</text>
</comment>
<dbReference type="EC" id="1.3.1.98" evidence="1"/>
<dbReference type="EMBL" id="AE017197">
    <property type="protein sequence ID" value="AAU03721.1"/>
    <property type="molecule type" value="Genomic_DNA"/>
</dbReference>
<dbReference type="RefSeq" id="WP_011190706.1">
    <property type="nucleotide sequence ID" value="NC_006142.1"/>
</dbReference>
<dbReference type="SMR" id="Q68XC1"/>
<dbReference type="KEGG" id="rty:RT0240"/>
<dbReference type="eggNOG" id="COG0812">
    <property type="taxonomic scope" value="Bacteria"/>
</dbReference>
<dbReference type="HOGENOM" id="CLU_035304_1_0_5"/>
<dbReference type="OrthoDB" id="9804753at2"/>
<dbReference type="UniPathway" id="UPA00219"/>
<dbReference type="Proteomes" id="UP000000604">
    <property type="component" value="Chromosome"/>
</dbReference>
<dbReference type="GO" id="GO:0005829">
    <property type="term" value="C:cytosol"/>
    <property type="evidence" value="ECO:0007669"/>
    <property type="project" value="TreeGrafter"/>
</dbReference>
<dbReference type="GO" id="GO:0071949">
    <property type="term" value="F:FAD binding"/>
    <property type="evidence" value="ECO:0007669"/>
    <property type="project" value="InterPro"/>
</dbReference>
<dbReference type="GO" id="GO:0008762">
    <property type="term" value="F:UDP-N-acetylmuramate dehydrogenase activity"/>
    <property type="evidence" value="ECO:0007669"/>
    <property type="project" value="UniProtKB-UniRule"/>
</dbReference>
<dbReference type="GO" id="GO:0051301">
    <property type="term" value="P:cell division"/>
    <property type="evidence" value="ECO:0007669"/>
    <property type="project" value="UniProtKB-KW"/>
</dbReference>
<dbReference type="GO" id="GO:0071555">
    <property type="term" value="P:cell wall organization"/>
    <property type="evidence" value="ECO:0007669"/>
    <property type="project" value="UniProtKB-KW"/>
</dbReference>
<dbReference type="GO" id="GO:0009252">
    <property type="term" value="P:peptidoglycan biosynthetic process"/>
    <property type="evidence" value="ECO:0007669"/>
    <property type="project" value="UniProtKB-UniRule"/>
</dbReference>
<dbReference type="GO" id="GO:0008360">
    <property type="term" value="P:regulation of cell shape"/>
    <property type="evidence" value="ECO:0007669"/>
    <property type="project" value="UniProtKB-KW"/>
</dbReference>
<dbReference type="Gene3D" id="3.30.465.10">
    <property type="match status" value="1"/>
</dbReference>
<dbReference type="Gene3D" id="3.90.78.10">
    <property type="entry name" value="UDP-N-acetylenolpyruvoylglucosamine reductase, C-terminal domain"/>
    <property type="match status" value="1"/>
</dbReference>
<dbReference type="Gene3D" id="3.30.43.10">
    <property type="entry name" value="Uridine Diphospho-n-acetylenolpyruvylglucosamine Reductase, domain 2"/>
    <property type="match status" value="1"/>
</dbReference>
<dbReference type="HAMAP" id="MF_00037">
    <property type="entry name" value="MurB"/>
    <property type="match status" value="1"/>
</dbReference>
<dbReference type="InterPro" id="IPR016166">
    <property type="entry name" value="FAD-bd_PCMH"/>
</dbReference>
<dbReference type="InterPro" id="IPR036318">
    <property type="entry name" value="FAD-bd_PCMH-like_sf"/>
</dbReference>
<dbReference type="InterPro" id="IPR016167">
    <property type="entry name" value="FAD-bd_PCMH_sub1"/>
</dbReference>
<dbReference type="InterPro" id="IPR016169">
    <property type="entry name" value="FAD-bd_PCMH_sub2"/>
</dbReference>
<dbReference type="InterPro" id="IPR003170">
    <property type="entry name" value="MurB"/>
</dbReference>
<dbReference type="InterPro" id="IPR011601">
    <property type="entry name" value="MurB_C"/>
</dbReference>
<dbReference type="InterPro" id="IPR036635">
    <property type="entry name" value="MurB_C_sf"/>
</dbReference>
<dbReference type="InterPro" id="IPR006094">
    <property type="entry name" value="Oxid_FAD_bind_N"/>
</dbReference>
<dbReference type="NCBIfam" id="TIGR00179">
    <property type="entry name" value="murB"/>
    <property type="match status" value="1"/>
</dbReference>
<dbReference type="NCBIfam" id="NF010480">
    <property type="entry name" value="PRK13905.1"/>
    <property type="match status" value="1"/>
</dbReference>
<dbReference type="PANTHER" id="PTHR21071">
    <property type="entry name" value="UDP-N-ACETYLENOLPYRUVOYLGLUCOSAMINE REDUCTASE"/>
    <property type="match status" value="1"/>
</dbReference>
<dbReference type="PANTHER" id="PTHR21071:SF4">
    <property type="entry name" value="UDP-N-ACETYLENOLPYRUVOYLGLUCOSAMINE REDUCTASE"/>
    <property type="match status" value="1"/>
</dbReference>
<dbReference type="Pfam" id="PF01565">
    <property type="entry name" value="FAD_binding_4"/>
    <property type="match status" value="1"/>
</dbReference>
<dbReference type="Pfam" id="PF02873">
    <property type="entry name" value="MurB_C"/>
    <property type="match status" value="1"/>
</dbReference>
<dbReference type="SUPFAM" id="SSF56176">
    <property type="entry name" value="FAD-binding/transporter-associated domain-like"/>
    <property type="match status" value="1"/>
</dbReference>
<dbReference type="SUPFAM" id="SSF56194">
    <property type="entry name" value="Uridine diphospho-N-Acetylenolpyruvylglucosamine reductase, MurB, C-terminal domain"/>
    <property type="match status" value="1"/>
</dbReference>
<dbReference type="PROSITE" id="PS51387">
    <property type="entry name" value="FAD_PCMH"/>
    <property type="match status" value="1"/>
</dbReference>
<organism>
    <name type="scientific">Rickettsia typhi (strain ATCC VR-144 / Wilmington)</name>
    <dbReference type="NCBI Taxonomy" id="257363"/>
    <lineage>
        <taxon>Bacteria</taxon>
        <taxon>Pseudomonadati</taxon>
        <taxon>Pseudomonadota</taxon>
        <taxon>Alphaproteobacteria</taxon>
        <taxon>Rickettsiales</taxon>
        <taxon>Rickettsiaceae</taxon>
        <taxon>Rickettsieae</taxon>
        <taxon>Rickettsia</taxon>
        <taxon>typhus group</taxon>
    </lineage>
</organism>
<protein>
    <recommendedName>
        <fullName evidence="1">UDP-N-acetylenolpyruvoylglucosamine reductase</fullName>
        <ecNumber evidence="1">1.3.1.98</ecNumber>
    </recommendedName>
    <alternativeName>
        <fullName evidence="1">UDP-N-acetylmuramate dehydrogenase</fullName>
    </alternativeName>
</protein>